<evidence type="ECO:0000250" key="1"/>
<evidence type="ECO:0000255" key="2"/>
<evidence type="ECO:0000305" key="3"/>
<proteinExistence type="evidence at transcript level"/>
<keyword id="KW-0297">G-protein coupled receptor</keyword>
<keyword id="KW-0325">Glycoprotein</keyword>
<keyword id="KW-0472">Membrane</keyword>
<keyword id="KW-0675">Receptor</keyword>
<keyword id="KW-1185">Reference proteome</keyword>
<keyword id="KW-0716">Sensory transduction</keyword>
<keyword id="KW-0919">Taste</keyword>
<keyword id="KW-0807">Transducer</keyword>
<keyword id="KW-0812">Transmembrane</keyword>
<keyword id="KW-1133">Transmembrane helix</keyword>
<protein>
    <recommendedName>
        <fullName>Taste receptor type 2 member 39</fullName>
        <shortName>T2R39</shortName>
    </recommendedName>
    <alternativeName>
        <fullName>Taste receptor type 2 member 57</fullName>
        <shortName>T2R57</shortName>
    </alternativeName>
</protein>
<accession>P59534</accession>
<accession>A4FUI7</accession>
<accession>Q3ZCN6</accession>
<accession>Q645W4</accession>
<organism>
    <name type="scientific">Homo sapiens</name>
    <name type="common">Human</name>
    <dbReference type="NCBI Taxonomy" id="9606"/>
    <lineage>
        <taxon>Eukaryota</taxon>
        <taxon>Metazoa</taxon>
        <taxon>Chordata</taxon>
        <taxon>Craniata</taxon>
        <taxon>Vertebrata</taxon>
        <taxon>Euteleostomi</taxon>
        <taxon>Mammalia</taxon>
        <taxon>Eutheria</taxon>
        <taxon>Euarchontoglires</taxon>
        <taxon>Primates</taxon>
        <taxon>Haplorrhini</taxon>
        <taxon>Catarrhini</taxon>
        <taxon>Hominidae</taxon>
        <taxon>Homo</taxon>
    </lineage>
</organism>
<sequence length="338" mass="38626">MLGRCFPPDTKEKQQLRMTKLCDPAESELSPFLITLILAVLLAEYLIGIIANGFIMAIHAAEWVQNKAVSTSGRILVFLSVSRIALQSLMMLEITISSTSLSFYSEDAVYYAFKISFIFLNFCSLWFAAWLSFFYFVKIANFSYPLFLKLRWRITGLIPWLLWLSVFISFSHSMFCINICTVYCNNSFPIHSSNSTKKTYLSEINVVGLAFFFNLGIVTPLIMFILTATLLILSLKRHTLHMGSNATGSNDPSMEAHMGAIKAISYFLILYIFNAVALFIYLSNMFDINSLWNNLCQIIMAAYPASHSILLIQDNPGLRRAWKRLQLRLHLYPKEWTL</sequence>
<comment type="function">
    <text evidence="1">Receptor that may play a role in the perception of bitterness and is gustducin-linked. May play a role in sensing the chemical composition of the gastrointestinal content. The activity of this receptor may stimulate alpha gustducin, mediate PLC-beta-2 activation and lead to the gating of TRPM5 (By similarity).</text>
</comment>
<comment type="subcellular location">
    <subcellularLocation>
        <location>Membrane</location>
        <topology>Multi-pass membrane protein</topology>
    </subcellularLocation>
</comment>
<comment type="tissue specificity">
    <text>Expressed in subsets of taste receptor cells of the tongue and exclusively in gustducin-positive cells.</text>
</comment>
<comment type="miscellaneous">
    <text>Most taste cells may be activated by a limited number of bitter compounds; individual taste cells can discriminate among bitter stimuli.</text>
</comment>
<comment type="similarity">
    <text evidence="3">Belongs to the G-protein coupled receptor T2R family.</text>
</comment>
<comment type="sequence caution" evidence="3">
    <conflict type="frameshift">
        <sequence resource="EMBL-CDS" id="AAM19321"/>
    </conflict>
</comment>
<gene>
    <name type="primary">TAS2R39</name>
</gene>
<reference key="1">
    <citation type="journal article" date="2002" name="Nat. Genet.">
        <title>The human TAS2R16 receptor mediates bitter taste in response to beta-glucopyranosides.</title>
        <authorList>
            <person name="Bufe B."/>
            <person name="Hofmann T."/>
            <person name="Krautwurst D."/>
            <person name="Raguse J.-D."/>
            <person name="Meyerhof W."/>
        </authorList>
    </citation>
    <scope>NUCLEOTIDE SEQUENCE [GENOMIC DNA]</scope>
</reference>
<reference key="2">
    <citation type="journal article" date="2005" name="Mol. Biol. Evol.">
        <title>Evolution of bitter taste receptors in humans and apes.</title>
        <authorList>
            <person name="Fischer A."/>
            <person name="Gilad Y."/>
            <person name="Man O."/>
            <person name="Paeaebo S."/>
        </authorList>
    </citation>
    <scope>NUCLEOTIDE SEQUENCE [GENOMIC DNA]</scope>
</reference>
<reference key="3">
    <citation type="journal article" date="2004" name="Genome Res.">
        <title>The status, quality, and expansion of the NIH full-length cDNA project: the Mammalian Gene Collection (MGC).</title>
        <authorList>
            <consortium name="The MGC Project Team"/>
        </authorList>
    </citation>
    <scope>NUCLEOTIDE SEQUENCE [LARGE SCALE MRNA]</scope>
</reference>
<reference key="4">
    <citation type="journal article" date="2002" name="Curr. Opin. Neurobiol.">
        <title>Receptors for bitter and sweet taste.</title>
        <authorList>
            <person name="Montmayeur J.-P."/>
            <person name="Matsunami H."/>
        </authorList>
    </citation>
    <scope>REVIEW</scope>
</reference>
<reference key="5">
    <citation type="journal article" date="2002" name="J. Biol. Chem.">
        <title>Molecular mechanisms of bitter and sweet taste transduction.</title>
        <authorList>
            <person name="Margolskee R.F."/>
        </authorList>
    </citation>
    <scope>REVIEW</scope>
</reference>
<reference key="6">
    <citation type="journal article" date="2003" name="Cell">
        <title>Coding of sweet, bitter, and umami tastes: different receptor cells sharing similar signaling pathways.</title>
        <authorList>
            <person name="Zhang Y."/>
            <person name="Hoon M.A."/>
            <person name="Chandrashekar J."/>
            <person name="Mueller K.L."/>
            <person name="Cook B."/>
            <person name="Wu D."/>
            <person name="Zuker C.S."/>
            <person name="Ryba N.J."/>
        </authorList>
    </citation>
    <scope>REVIEW</scope>
</reference>
<feature type="chain" id="PRO_0000082281" description="Taste receptor type 2 member 39">
    <location>
        <begin position="1"/>
        <end position="338"/>
    </location>
</feature>
<feature type="topological domain" description="Extracellular" evidence="2">
    <location>
        <begin position="1"/>
        <end position="30"/>
    </location>
</feature>
<feature type="transmembrane region" description="Helical; Name=1" evidence="2">
    <location>
        <begin position="31"/>
        <end position="51"/>
    </location>
</feature>
<feature type="topological domain" description="Cytoplasmic" evidence="2">
    <location>
        <begin position="52"/>
        <end position="74"/>
    </location>
</feature>
<feature type="transmembrane region" description="Helical; Name=2" evidence="2">
    <location>
        <begin position="75"/>
        <end position="95"/>
    </location>
</feature>
<feature type="topological domain" description="Extracellular" evidence="2">
    <location>
        <begin position="96"/>
        <end position="116"/>
    </location>
</feature>
<feature type="transmembrane region" description="Helical; Name=3" evidence="2">
    <location>
        <begin position="117"/>
        <end position="137"/>
    </location>
</feature>
<feature type="topological domain" description="Cytoplasmic" evidence="2">
    <location>
        <begin position="138"/>
        <end position="156"/>
    </location>
</feature>
<feature type="transmembrane region" description="Helical; Name=4" evidence="2">
    <location>
        <begin position="157"/>
        <end position="177"/>
    </location>
</feature>
<feature type="topological domain" description="Extracellular" evidence="2">
    <location>
        <begin position="178"/>
        <end position="205"/>
    </location>
</feature>
<feature type="transmembrane region" description="Helical; Name=5" evidence="2">
    <location>
        <begin position="206"/>
        <end position="226"/>
    </location>
</feature>
<feature type="topological domain" description="Cytoplasmic" evidence="2">
    <location>
        <begin position="227"/>
        <end position="262"/>
    </location>
</feature>
<feature type="transmembrane region" description="Helical; Name=6" evidence="2">
    <location>
        <begin position="263"/>
        <end position="283"/>
    </location>
</feature>
<feature type="topological domain" description="Extracellular" evidence="2">
    <location>
        <begin position="284"/>
        <end position="291"/>
    </location>
</feature>
<feature type="transmembrane region" description="Helical; Name=7" evidence="2">
    <location>
        <begin position="292"/>
        <end position="312"/>
    </location>
</feature>
<feature type="topological domain" description="Cytoplasmic" evidence="2">
    <location>
        <begin position="313"/>
        <end position="338"/>
    </location>
</feature>
<feature type="glycosylation site" description="N-linked (GlcNAc...) asparagine" evidence="2">
    <location>
        <position position="185"/>
    </location>
</feature>
<feature type="glycosylation site" description="N-linked (GlcNAc...) asparagine" evidence="2">
    <location>
        <position position="194"/>
    </location>
</feature>
<feature type="sequence variant" id="VAR_053348" description="In dbSNP:rs35474877.">
    <original>S</original>
    <variation>F</variation>
    <location>
        <position position="193"/>
    </location>
</feature>
<feature type="sequence variant" id="VAR_053349" description="In dbSNP:rs34169190.">
    <original>K</original>
    <variation>E</variation>
    <location>
        <position position="197"/>
    </location>
</feature>
<name>T2R39_HUMAN</name>
<dbReference type="EMBL" id="AF494230">
    <property type="protein sequence ID" value="AAM19321.1"/>
    <property type="status" value="ALT_FRAME"/>
    <property type="molecule type" value="Genomic_DNA"/>
</dbReference>
<dbReference type="EMBL" id="AY724959">
    <property type="protein sequence ID" value="AAU21155.1"/>
    <property type="molecule type" value="Genomic_DNA"/>
</dbReference>
<dbReference type="EMBL" id="BC100947">
    <property type="protein sequence ID" value="AAI00948.1"/>
    <property type="molecule type" value="mRNA"/>
</dbReference>
<dbReference type="EMBL" id="BC100948">
    <property type="protein sequence ID" value="AAI00949.1"/>
    <property type="molecule type" value="mRNA"/>
</dbReference>
<dbReference type="EMBL" id="BC114952">
    <property type="protein sequence ID" value="AAI14953.1"/>
    <property type="molecule type" value="mRNA"/>
</dbReference>
<dbReference type="CCDS" id="CCDS47729.1"/>
<dbReference type="RefSeq" id="NP_795362.2">
    <property type="nucleotide sequence ID" value="NM_176881.2"/>
</dbReference>
<dbReference type="SMR" id="P59534"/>
<dbReference type="BioGRID" id="129240">
    <property type="interactions" value="151"/>
</dbReference>
<dbReference type="FunCoup" id="P59534">
    <property type="interactions" value="264"/>
</dbReference>
<dbReference type="IntAct" id="P59534">
    <property type="interactions" value="2"/>
</dbReference>
<dbReference type="STRING" id="9606.ENSP00000405095"/>
<dbReference type="ChEMBL" id="CHEMBL4523249"/>
<dbReference type="DrugCentral" id="P59534"/>
<dbReference type="GuidetoPHARMACOLOGY" id="675"/>
<dbReference type="GlyCosmos" id="P59534">
    <property type="glycosylation" value="2 sites, No reported glycans"/>
</dbReference>
<dbReference type="GlyGen" id="P59534">
    <property type="glycosylation" value="2 sites"/>
</dbReference>
<dbReference type="iPTMnet" id="P59534"/>
<dbReference type="PhosphoSitePlus" id="P59534"/>
<dbReference type="BioMuta" id="TAS2R39"/>
<dbReference type="DMDM" id="55977808"/>
<dbReference type="PaxDb" id="9606-ENSP00000405095"/>
<dbReference type="Antibodypedia" id="57990">
    <property type="antibodies" value="52 antibodies from 17 providers"/>
</dbReference>
<dbReference type="DNASU" id="259285"/>
<dbReference type="Ensembl" id="ENST00000446620.1">
    <property type="protein sequence ID" value="ENSP00000405095.1"/>
    <property type="gene ID" value="ENSG00000236398.2"/>
</dbReference>
<dbReference type="GeneID" id="259285"/>
<dbReference type="KEGG" id="hsa:259285"/>
<dbReference type="MANE-Select" id="ENST00000446620.1">
    <property type="protein sequence ID" value="ENSP00000405095.1"/>
    <property type="RefSeq nucleotide sequence ID" value="NM_176881.2"/>
    <property type="RefSeq protein sequence ID" value="NP_795362.2"/>
</dbReference>
<dbReference type="UCSC" id="uc011ksw.2">
    <property type="organism name" value="human"/>
</dbReference>
<dbReference type="AGR" id="HGNC:18886"/>
<dbReference type="CTD" id="259285"/>
<dbReference type="GeneCards" id="TAS2R39"/>
<dbReference type="HGNC" id="HGNC:18886">
    <property type="gene designation" value="TAS2R39"/>
</dbReference>
<dbReference type="HPA" id="ENSG00000236398">
    <property type="expression patterns" value="Not detected"/>
</dbReference>
<dbReference type="neXtProt" id="NX_P59534"/>
<dbReference type="PharmGKB" id="PA38739"/>
<dbReference type="VEuPathDB" id="HostDB:ENSG00000236398"/>
<dbReference type="eggNOG" id="ENOG502SQHF">
    <property type="taxonomic scope" value="Eukaryota"/>
</dbReference>
<dbReference type="GeneTree" id="ENSGT01100000263477"/>
<dbReference type="HOGENOM" id="CLU_072337_3_0_1"/>
<dbReference type="InParanoid" id="P59534"/>
<dbReference type="OMA" id="LYMSNIF"/>
<dbReference type="OrthoDB" id="8876749at2759"/>
<dbReference type="PAN-GO" id="P59534">
    <property type="GO annotations" value="3 GO annotations based on evolutionary models"/>
</dbReference>
<dbReference type="PhylomeDB" id="P59534"/>
<dbReference type="TreeFam" id="TF335891"/>
<dbReference type="PathwayCommons" id="P59534"/>
<dbReference type="Reactome" id="R-HSA-418594">
    <property type="pathway name" value="G alpha (i) signalling events"/>
</dbReference>
<dbReference type="Reactome" id="R-HSA-420499">
    <property type="pathway name" value="Class C/3 (Metabotropic glutamate/pheromone receptors)"/>
</dbReference>
<dbReference type="Reactome" id="R-HSA-9717207">
    <property type="pathway name" value="Sensory perception of sweet, bitter, and umami (glutamate) taste"/>
</dbReference>
<dbReference type="BioGRID-ORCS" id="259285">
    <property type="hits" value="15 hits in 1100 CRISPR screens"/>
</dbReference>
<dbReference type="GeneWiki" id="TAS2R39"/>
<dbReference type="GenomeRNAi" id="259285"/>
<dbReference type="Pharos" id="P59534">
    <property type="development level" value="Tchem"/>
</dbReference>
<dbReference type="PRO" id="PR:P59534"/>
<dbReference type="Proteomes" id="UP000005640">
    <property type="component" value="Chromosome 7"/>
</dbReference>
<dbReference type="RNAct" id="P59534">
    <property type="molecule type" value="protein"/>
</dbReference>
<dbReference type="Bgee" id="ENSG00000236398">
    <property type="expression patterns" value="Expressed in male germ line stem cell (sensu Vertebrata) in testis and 2 other cell types or tissues"/>
</dbReference>
<dbReference type="GO" id="GO:0016020">
    <property type="term" value="C:membrane"/>
    <property type="evidence" value="ECO:0000318"/>
    <property type="project" value="GO_Central"/>
</dbReference>
<dbReference type="GO" id="GO:0005886">
    <property type="term" value="C:plasma membrane"/>
    <property type="evidence" value="ECO:0000304"/>
    <property type="project" value="Reactome"/>
</dbReference>
<dbReference type="GO" id="GO:0033038">
    <property type="term" value="F:bitter taste receptor activity"/>
    <property type="evidence" value="ECO:0000314"/>
    <property type="project" value="UniProtKB"/>
</dbReference>
<dbReference type="GO" id="GO:0004930">
    <property type="term" value="F:G protein-coupled receptor activity"/>
    <property type="evidence" value="ECO:0007669"/>
    <property type="project" value="UniProtKB-KW"/>
</dbReference>
<dbReference type="GO" id="GO:0001580">
    <property type="term" value="P:detection of chemical stimulus involved in sensory perception of bitter taste"/>
    <property type="evidence" value="ECO:0000314"/>
    <property type="project" value="UniProtKB"/>
</dbReference>
<dbReference type="CDD" id="cd15015">
    <property type="entry name" value="7tm_TAS2R39"/>
    <property type="match status" value="1"/>
</dbReference>
<dbReference type="FunFam" id="1.20.1070.10:FF:000055">
    <property type="entry name" value="Taste receptor type 2"/>
    <property type="match status" value="1"/>
</dbReference>
<dbReference type="Gene3D" id="1.20.1070.10">
    <property type="entry name" value="Rhodopsin 7-helix transmembrane proteins"/>
    <property type="match status" value="1"/>
</dbReference>
<dbReference type="InterPro" id="IPR007960">
    <property type="entry name" value="TAS2R"/>
</dbReference>
<dbReference type="PANTHER" id="PTHR11394">
    <property type="entry name" value="TASTE RECEPTOR TYPE 2"/>
    <property type="match status" value="1"/>
</dbReference>
<dbReference type="PANTHER" id="PTHR11394:SF142">
    <property type="entry name" value="TASTE RECEPTOR TYPE 2 MEMBER 39"/>
    <property type="match status" value="1"/>
</dbReference>
<dbReference type="Pfam" id="PF05296">
    <property type="entry name" value="TAS2R"/>
    <property type="match status" value="1"/>
</dbReference>
<dbReference type="SUPFAM" id="SSF81321">
    <property type="entry name" value="Family A G protein-coupled receptor-like"/>
    <property type="match status" value="1"/>
</dbReference>